<organism>
    <name type="scientific">Bacillus cereus (strain Q1)</name>
    <dbReference type="NCBI Taxonomy" id="361100"/>
    <lineage>
        <taxon>Bacteria</taxon>
        <taxon>Bacillati</taxon>
        <taxon>Bacillota</taxon>
        <taxon>Bacilli</taxon>
        <taxon>Bacillales</taxon>
        <taxon>Bacillaceae</taxon>
        <taxon>Bacillus</taxon>
        <taxon>Bacillus cereus group</taxon>
    </lineage>
</organism>
<feature type="chain" id="PRO_1000133429" description="Isopentenyl-diphosphate delta-isomerase">
    <location>
        <begin position="1"/>
        <end position="349"/>
    </location>
</feature>
<feature type="binding site" evidence="1">
    <location>
        <begin position="6"/>
        <end position="7"/>
    </location>
    <ligand>
        <name>substrate</name>
    </ligand>
</feature>
<feature type="binding site" evidence="1">
    <location>
        <begin position="62"/>
        <end position="64"/>
    </location>
    <ligand>
        <name>FMN</name>
        <dbReference type="ChEBI" id="CHEBI:58210"/>
    </ligand>
</feature>
<feature type="binding site" evidence="1">
    <location>
        <position position="93"/>
    </location>
    <ligand>
        <name>FMN</name>
        <dbReference type="ChEBI" id="CHEBI:58210"/>
    </ligand>
</feature>
<feature type="binding site" evidence="1">
    <location>
        <position position="122"/>
    </location>
    <ligand>
        <name>FMN</name>
        <dbReference type="ChEBI" id="CHEBI:58210"/>
    </ligand>
</feature>
<feature type="binding site" evidence="1">
    <location>
        <position position="152"/>
    </location>
    <ligand>
        <name>substrate</name>
    </ligand>
</feature>
<feature type="binding site" evidence="1">
    <location>
        <position position="153"/>
    </location>
    <ligand>
        <name>Mg(2+)</name>
        <dbReference type="ChEBI" id="CHEBI:18420"/>
    </ligand>
</feature>
<feature type="binding site" evidence="1">
    <location>
        <position position="184"/>
    </location>
    <ligand>
        <name>FMN</name>
        <dbReference type="ChEBI" id="CHEBI:58210"/>
    </ligand>
</feature>
<feature type="binding site" evidence="1">
    <location>
        <position position="214"/>
    </location>
    <ligand>
        <name>FMN</name>
        <dbReference type="ChEBI" id="CHEBI:58210"/>
    </ligand>
</feature>
<feature type="binding site" evidence="1">
    <location>
        <begin position="258"/>
        <end position="259"/>
    </location>
    <ligand>
        <name>FMN</name>
        <dbReference type="ChEBI" id="CHEBI:58210"/>
    </ligand>
</feature>
<feature type="binding site" evidence="1">
    <location>
        <begin position="280"/>
        <end position="281"/>
    </location>
    <ligand>
        <name>FMN</name>
        <dbReference type="ChEBI" id="CHEBI:58210"/>
    </ligand>
</feature>
<comment type="function">
    <text evidence="1">Involved in the biosynthesis of isoprenoids. Catalyzes the 1,3-allylic rearrangement of the homoallylic substrate isopentenyl (IPP) to its allylic isomer, dimethylallyl diphosphate (DMAPP).</text>
</comment>
<comment type="catalytic activity">
    <reaction evidence="1">
        <text>isopentenyl diphosphate = dimethylallyl diphosphate</text>
        <dbReference type="Rhea" id="RHEA:23284"/>
        <dbReference type="ChEBI" id="CHEBI:57623"/>
        <dbReference type="ChEBI" id="CHEBI:128769"/>
        <dbReference type="EC" id="5.3.3.2"/>
    </reaction>
</comment>
<comment type="cofactor">
    <cofactor evidence="1">
        <name>FMN</name>
        <dbReference type="ChEBI" id="CHEBI:58210"/>
    </cofactor>
</comment>
<comment type="cofactor">
    <cofactor evidence="1">
        <name>NADPH</name>
        <dbReference type="ChEBI" id="CHEBI:57783"/>
    </cofactor>
</comment>
<comment type="cofactor">
    <cofactor evidence="1">
        <name>Mg(2+)</name>
        <dbReference type="ChEBI" id="CHEBI:18420"/>
    </cofactor>
</comment>
<comment type="subunit">
    <text evidence="1">Homooctamer. Dimer of tetramers.</text>
</comment>
<comment type="subcellular location">
    <subcellularLocation>
        <location evidence="1">Cytoplasm</location>
    </subcellularLocation>
</comment>
<comment type="similarity">
    <text evidence="1">Belongs to the IPP isomerase type 2 family.</text>
</comment>
<reference key="1">
    <citation type="journal article" date="2009" name="J. Bacteriol.">
        <title>Complete genome sequence of the extremophilic Bacillus cereus strain Q1 with industrial applications.</title>
        <authorList>
            <person name="Xiong Z."/>
            <person name="Jiang Y."/>
            <person name="Qi D."/>
            <person name="Lu H."/>
            <person name="Yang F."/>
            <person name="Yang J."/>
            <person name="Chen L."/>
            <person name="Sun L."/>
            <person name="Xu X."/>
            <person name="Xue Y."/>
            <person name="Zhu Y."/>
            <person name="Jin Q."/>
        </authorList>
    </citation>
    <scope>NUCLEOTIDE SEQUENCE [LARGE SCALE GENOMIC DNA]</scope>
    <source>
        <strain>Q1</strain>
    </source>
</reference>
<gene>
    <name evidence="1" type="primary">fni</name>
    <name type="ordered locus">BCQ_1569</name>
</gene>
<protein>
    <recommendedName>
        <fullName evidence="1">Isopentenyl-diphosphate delta-isomerase</fullName>
        <shortName evidence="1">IPP isomerase</shortName>
        <ecNumber evidence="1">5.3.3.2</ecNumber>
    </recommendedName>
    <alternativeName>
        <fullName evidence="1">Isopentenyl diphosphate:dimethylallyl diphosphate isomerase</fullName>
    </alternativeName>
    <alternativeName>
        <fullName evidence="1">Isopentenyl pyrophosphate isomerase</fullName>
    </alternativeName>
    <alternativeName>
        <fullName evidence="1">Type 2 isopentenyl diphosphate isomerase</fullName>
        <shortName evidence="1">IDI-2</shortName>
    </alternativeName>
</protein>
<keyword id="KW-0963">Cytoplasm</keyword>
<keyword id="KW-0285">Flavoprotein</keyword>
<keyword id="KW-0288">FMN</keyword>
<keyword id="KW-0413">Isomerase</keyword>
<keyword id="KW-0414">Isoprene biosynthesis</keyword>
<keyword id="KW-0460">Magnesium</keyword>
<keyword id="KW-0479">Metal-binding</keyword>
<keyword id="KW-0521">NADP</keyword>
<proteinExistence type="inferred from homology"/>
<sequence length="349" mass="38211">MVRAKRKLDHIEYALSTGQSRTHGFHDIDFVHQSLPNSNYDTITCETKIGELSLSSPIFINAMTGGGGEKTLHINEQLAYVAKHHNLAMAVGSQMAALKDESEAASYKIIRKVNPNGIFFANLGSEATVEQAERAVDMVEANALQIHLNVIQELTMPEGDRDFTGVLQRIEKIVLNSKVPVIVKEVGFGMSKETMQQLASVGVTAIDIGGQGGTNFAAVENERRQRMLSYFNNWGIQTATSIIEATSTNNNLSFIASGGIQTALDVAKAIALGANTTAFAGYFLRILMQDGIEKLVDEIDLLHADLKFIMTALGAKTIEELQSVPLVVKGETYHWLTQRGIDTTHYSRR</sequence>
<evidence type="ECO:0000255" key="1">
    <source>
        <dbReference type="HAMAP-Rule" id="MF_00354"/>
    </source>
</evidence>
<name>IDI2_BACCQ</name>
<accession>B9IVM2</accession>
<dbReference type="EC" id="5.3.3.2" evidence="1"/>
<dbReference type="EMBL" id="CP000227">
    <property type="protein sequence ID" value="ACM11997.1"/>
    <property type="molecule type" value="Genomic_DNA"/>
</dbReference>
<dbReference type="SMR" id="B9IVM2"/>
<dbReference type="KEGG" id="bcq:BCQ_1569"/>
<dbReference type="HOGENOM" id="CLU_065515_0_0_9"/>
<dbReference type="Proteomes" id="UP000000441">
    <property type="component" value="Chromosome"/>
</dbReference>
<dbReference type="GO" id="GO:0005737">
    <property type="term" value="C:cytoplasm"/>
    <property type="evidence" value="ECO:0007669"/>
    <property type="project" value="UniProtKB-SubCell"/>
</dbReference>
<dbReference type="GO" id="GO:0010181">
    <property type="term" value="F:FMN binding"/>
    <property type="evidence" value="ECO:0007669"/>
    <property type="project" value="UniProtKB-UniRule"/>
</dbReference>
<dbReference type="GO" id="GO:0004452">
    <property type="term" value="F:isopentenyl-diphosphate delta-isomerase activity"/>
    <property type="evidence" value="ECO:0007669"/>
    <property type="project" value="UniProtKB-UniRule"/>
</dbReference>
<dbReference type="GO" id="GO:0000287">
    <property type="term" value="F:magnesium ion binding"/>
    <property type="evidence" value="ECO:0007669"/>
    <property type="project" value="UniProtKB-UniRule"/>
</dbReference>
<dbReference type="GO" id="GO:0070402">
    <property type="term" value="F:NADPH binding"/>
    <property type="evidence" value="ECO:0007669"/>
    <property type="project" value="UniProtKB-UniRule"/>
</dbReference>
<dbReference type="GO" id="GO:0016491">
    <property type="term" value="F:oxidoreductase activity"/>
    <property type="evidence" value="ECO:0007669"/>
    <property type="project" value="InterPro"/>
</dbReference>
<dbReference type="GO" id="GO:0008299">
    <property type="term" value="P:isoprenoid biosynthetic process"/>
    <property type="evidence" value="ECO:0007669"/>
    <property type="project" value="UniProtKB-UniRule"/>
</dbReference>
<dbReference type="CDD" id="cd02811">
    <property type="entry name" value="IDI-2_FMN"/>
    <property type="match status" value="1"/>
</dbReference>
<dbReference type="FunFam" id="3.20.20.70:FF:000115">
    <property type="entry name" value="Isopentenyl-diphosphate delta-isomerase"/>
    <property type="match status" value="1"/>
</dbReference>
<dbReference type="Gene3D" id="3.20.20.70">
    <property type="entry name" value="Aldolase class I"/>
    <property type="match status" value="1"/>
</dbReference>
<dbReference type="HAMAP" id="MF_00354">
    <property type="entry name" value="Idi_2"/>
    <property type="match status" value="1"/>
</dbReference>
<dbReference type="InterPro" id="IPR013785">
    <property type="entry name" value="Aldolase_TIM"/>
</dbReference>
<dbReference type="InterPro" id="IPR000262">
    <property type="entry name" value="FMN-dep_DH"/>
</dbReference>
<dbReference type="InterPro" id="IPR011179">
    <property type="entry name" value="IPdP_isomerase"/>
</dbReference>
<dbReference type="NCBIfam" id="TIGR02151">
    <property type="entry name" value="IPP_isom_2"/>
    <property type="match status" value="1"/>
</dbReference>
<dbReference type="PANTHER" id="PTHR43665">
    <property type="entry name" value="ISOPENTENYL-DIPHOSPHATE DELTA-ISOMERASE"/>
    <property type="match status" value="1"/>
</dbReference>
<dbReference type="PANTHER" id="PTHR43665:SF1">
    <property type="entry name" value="ISOPENTENYL-DIPHOSPHATE DELTA-ISOMERASE"/>
    <property type="match status" value="1"/>
</dbReference>
<dbReference type="Pfam" id="PF01070">
    <property type="entry name" value="FMN_dh"/>
    <property type="match status" value="1"/>
</dbReference>
<dbReference type="PIRSF" id="PIRSF003314">
    <property type="entry name" value="IPP_isomerase"/>
    <property type="match status" value="1"/>
</dbReference>
<dbReference type="SMART" id="SM01240">
    <property type="entry name" value="IMPDH"/>
    <property type="match status" value="1"/>
</dbReference>
<dbReference type="SUPFAM" id="SSF51395">
    <property type="entry name" value="FMN-linked oxidoreductases"/>
    <property type="match status" value="1"/>
</dbReference>